<gene>
    <name type="primary">CYP9E2</name>
</gene>
<sequence length="533" mass="61482">MMSLESLWLWTFAISFIVLIAYLIGTWNHDFFSKRNIPSLKTVPFLGNMGPLVLRKASFAEHSQNIYNRLKGYKYGGMFEFMNPVLVLRDPELIKMVTVKDFEYFLDHRAPISEEAEPMFGKNLFNLRGHRWKEMRSTLSPAFTSSKMKNMFVLVSECGKQLGEFLMECSRDKNKKTEGCKIEREGDLLTVELKDLYTRYTNDVIATSAFGIGCDSLKNPKNEFFQMGKDVTNFGGIRQFIFLGYLFSPRLMKYLNLKFLSSKATEFFRFLVHNTMDTRKTKGIIRPDMIHLLMQAKEGTLKSEENGETNGKIASKPKWDDDDLTAQAVLFFFAGFDTASTLLCFMSHLLATNPDVQNRLQDEIDQSLEENDGKLTYEAIHSMKYLDMVVSESLRLYPPAIFTDRKCVKNYRLPMEPSYTLEPGDAVWIPIYAIHHDPKYYPNPEKFDPERFSDENKDNIKPFTYLPFGSGPRNCIGNRFALMESKIALVHLLCRFNLKVVSKTPIPIKITKKGFNMTVDGGFWLGLEERTNQ</sequence>
<comment type="cofactor">
    <cofactor evidence="1">
        <name>heme</name>
        <dbReference type="ChEBI" id="CHEBI:30413"/>
    </cofactor>
</comment>
<comment type="subcellular location">
    <subcellularLocation>
        <location evidence="3">Endoplasmic reticulum membrane</location>
        <topology evidence="3">Peripheral membrane protein</topology>
    </subcellularLocation>
    <subcellularLocation>
        <location evidence="3">Microsome membrane</location>
        <topology evidence="3">Peripheral membrane protein</topology>
    </subcellularLocation>
</comment>
<comment type="induction">
    <text evidence="2">Expressed at all life stages.</text>
</comment>
<comment type="similarity">
    <text evidence="3">Belongs to the cytochrome P450 family.</text>
</comment>
<proteinExistence type="evidence at transcript level"/>
<accession>Q964T2</accession>
<keyword id="KW-0256">Endoplasmic reticulum</keyword>
<keyword id="KW-0349">Heme</keyword>
<keyword id="KW-0408">Iron</keyword>
<keyword id="KW-0472">Membrane</keyword>
<keyword id="KW-0479">Metal-binding</keyword>
<keyword id="KW-0492">Microsome</keyword>
<keyword id="KW-0503">Monooxygenase</keyword>
<keyword id="KW-0560">Oxidoreductase</keyword>
<reference key="1">
    <citation type="journal article" date="2001" name="Gene">
        <title>CYP9E2, CYP4C21 and related pseudogenes from German cockroaches, Blattella germanica: implications for molecular evolution, expression studies and nomenclature of P450s.</title>
        <authorList>
            <person name="Wen Z."/>
            <person name="Horak C.E."/>
            <person name="Scott J.G."/>
        </authorList>
    </citation>
    <scope>NUCLEOTIDE SEQUENCE [MRNA]</scope>
    <scope>INDUCTION</scope>
</reference>
<dbReference type="EC" id="1.14.-.-"/>
<dbReference type="EMBL" id="AF275640">
    <property type="protein sequence ID" value="AAK69410.1"/>
    <property type="molecule type" value="mRNA"/>
</dbReference>
<dbReference type="SMR" id="Q964T2"/>
<dbReference type="GO" id="GO:0005789">
    <property type="term" value="C:endoplasmic reticulum membrane"/>
    <property type="evidence" value="ECO:0007669"/>
    <property type="project" value="UniProtKB-SubCell"/>
</dbReference>
<dbReference type="GO" id="GO:0020037">
    <property type="term" value="F:heme binding"/>
    <property type="evidence" value="ECO:0007669"/>
    <property type="project" value="InterPro"/>
</dbReference>
<dbReference type="GO" id="GO:0005506">
    <property type="term" value="F:iron ion binding"/>
    <property type="evidence" value="ECO:0007669"/>
    <property type="project" value="InterPro"/>
</dbReference>
<dbReference type="GO" id="GO:0004497">
    <property type="term" value="F:monooxygenase activity"/>
    <property type="evidence" value="ECO:0007669"/>
    <property type="project" value="UniProtKB-KW"/>
</dbReference>
<dbReference type="GO" id="GO:0016705">
    <property type="term" value="F:oxidoreductase activity, acting on paired donors, with incorporation or reduction of molecular oxygen"/>
    <property type="evidence" value="ECO:0007669"/>
    <property type="project" value="InterPro"/>
</dbReference>
<dbReference type="CDD" id="cd11056">
    <property type="entry name" value="CYP6-like"/>
    <property type="match status" value="1"/>
</dbReference>
<dbReference type="FunFam" id="1.10.630.10:FF:000042">
    <property type="entry name" value="Cytochrome P450"/>
    <property type="match status" value="1"/>
</dbReference>
<dbReference type="Gene3D" id="1.10.630.10">
    <property type="entry name" value="Cytochrome P450"/>
    <property type="match status" value="1"/>
</dbReference>
<dbReference type="InterPro" id="IPR001128">
    <property type="entry name" value="Cyt_P450"/>
</dbReference>
<dbReference type="InterPro" id="IPR017972">
    <property type="entry name" value="Cyt_P450_CS"/>
</dbReference>
<dbReference type="InterPro" id="IPR002401">
    <property type="entry name" value="Cyt_P450_E_grp-I"/>
</dbReference>
<dbReference type="InterPro" id="IPR036396">
    <property type="entry name" value="Cyt_P450_sf"/>
</dbReference>
<dbReference type="InterPro" id="IPR050476">
    <property type="entry name" value="Insect_CytP450_Detox"/>
</dbReference>
<dbReference type="PANTHER" id="PTHR24292:SF54">
    <property type="entry name" value="CYP9F3-RELATED"/>
    <property type="match status" value="1"/>
</dbReference>
<dbReference type="PANTHER" id="PTHR24292">
    <property type="entry name" value="CYTOCHROME P450"/>
    <property type="match status" value="1"/>
</dbReference>
<dbReference type="Pfam" id="PF00067">
    <property type="entry name" value="p450"/>
    <property type="match status" value="1"/>
</dbReference>
<dbReference type="PRINTS" id="PR00463">
    <property type="entry name" value="EP450I"/>
</dbReference>
<dbReference type="PRINTS" id="PR00385">
    <property type="entry name" value="P450"/>
</dbReference>
<dbReference type="SUPFAM" id="SSF48264">
    <property type="entry name" value="Cytochrome P450"/>
    <property type="match status" value="1"/>
</dbReference>
<dbReference type="PROSITE" id="PS00086">
    <property type="entry name" value="CYTOCHROME_P450"/>
    <property type="match status" value="1"/>
</dbReference>
<protein>
    <recommendedName>
        <fullName>Cytochrome P450 9e2</fullName>
        <ecNumber>1.14.-.-</ecNumber>
    </recommendedName>
    <alternativeName>
        <fullName>CYPIXE2</fullName>
    </alternativeName>
</protein>
<name>CP9E2_BLAGE</name>
<organism>
    <name type="scientific">Blattella germanica</name>
    <name type="common">German cockroach</name>
    <name type="synonym">Blatta germanica</name>
    <dbReference type="NCBI Taxonomy" id="6973"/>
    <lineage>
        <taxon>Eukaryota</taxon>
        <taxon>Metazoa</taxon>
        <taxon>Ecdysozoa</taxon>
        <taxon>Arthropoda</taxon>
        <taxon>Hexapoda</taxon>
        <taxon>Insecta</taxon>
        <taxon>Pterygota</taxon>
        <taxon>Neoptera</taxon>
        <taxon>Polyneoptera</taxon>
        <taxon>Dictyoptera</taxon>
        <taxon>Blattodea</taxon>
        <taxon>Blaberoidea</taxon>
        <taxon>Blattellidae</taxon>
        <taxon>Blattella</taxon>
    </lineage>
</organism>
<evidence type="ECO:0000250" key="1"/>
<evidence type="ECO:0000269" key="2">
    <source>
    </source>
</evidence>
<evidence type="ECO:0000305" key="3"/>
<feature type="chain" id="PRO_0000051919" description="Cytochrome P450 9e2">
    <location>
        <begin position="1"/>
        <end position="533"/>
    </location>
</feature>
<feature type="binding site" description="axial binding residue" evidence="1">
    <location>
        <position position="475"/>
    </location>
    <ligand>
        <name>heme</name>
        <dbReference type="ChEBI" id="CHEBI:30413"/>
    </ligand>
    <ligandPart>
        <name>Fe</name>
        <dbReference type="ChEBI" id="CHEBI:18248"/>
    </ligandPart>
</feature>